<proteinExistence type="inferred from homology"/>
<sequence length="173" mass="19994">MNTNKALFLDRDGIINIDKGYVSQKEDFEFQKGIFELLKHAKSLGYKLLLITNQSGINRGYYTLKDFEQLTQYLQESLFKELGFNLDGIYFCRHAPEENCACRKPKPSLILQAAKEHQICLEQSFMIGDKESDMLAGLNAKVKNNLLLIQNPLKTPHSWIQCKDFKEMIDLIK</sequence>
<name>GMHBB_HELPY</name>
<reference key="1">
    <citation type="journal article" date="1997" name="Nature">
        <title>The complete genome sequence of the gastric pathogen Helicobacter pylori.</title>
        <authorList>
            <person name="Tomb J.-F."/>
            <person name="White O."/>
            <person name="Kerlavage A.R."/>
            <person name="Clayton R.A."/>
            <person name="Sutton G.G."/>
            <person name="Fleischmann R.D."/>
            <person name="Ketchum K.A."/>
            <person name="Klenk H.-P."/>
            <person name="Gill S.R."/>
            <person name="Dougherty B.A."/>
            <person name="Nelson K.E."/>
            <person name="Quackenbush J."/>
            <person name="Zhou L."/>
            <person name="Kirkness E.F."/>
            <person name="Peterson S.N."/>
            <person name="Loftus B.J."/>
            <person name="Richardson D.L."/>
            <person name="Dodson R.J."/>
            <person name="Khalak H.G."/>
            <person name="Glodek A."/>
            <person name="McKenney K."/>
            <person name="FitzGerald L.M."/>
            <person name="Lee N."/>
            <person name="Adams M.D."/>
            <person name="Hickey E.K."/>
            <person name="Berg D.E."/>
            <person name="Gocayne J.D."/>
            <person name="Utterback T.R."/>
            <person name="Peterson J.D."/>
            <person name="Kelley J.M."/>
            <person name="Cotton M.D."/>
            <person name="Weidman J.F."/>
            <person name="Fujii C."/>
            <person name="Bowman C."/>
            <person name="Watthey L."/>
            <person name="Wallin E."/>
            <person name="Hayes W.S."/>
            <person name="Borodovsky M."/>
            <person name="Karp P.D."/>
            <person name="Smith H.O."/>
            <person name="Fraser C.M."/>
            <person name="Venter J.C."/>
        </authorList>
    </citation>
    <scope>NUCLEOTIDE SEQUENCE [LARGE SCALE GENOMIC DNA]</scope>
    <source>
        <strain>ATCC 700392 / 26695</strain>
    </source>
</reference>
<reference key="2">
    <citation type="journal article" date="2002" name="Microbiology">
        <title>Novel pathways for biosynthesis of nucleotide-activated glycero-manno-heptose precursors of bacterial glycoproteins and cell surface polysaccharides.</title>
        <authorList>
            <person name="Valvano M.A."/>
            <person name="Messner P."/>
            <person name="Kosma P."/>
        </authorList>
    </citation>
    <scope>BIOSYNTHESIS OF NUCLEOTIDE-ACTIVATED GLYCERO-MANNO-HEPTOSE</scope>
</reference>
<comment type="function">
    <text evidence="1">Converts the D-glycero-beta-D-manno-heptose 1,7-bisphosphate intermediate into D-glycero-beta-D-manno-heptose 1-phosphate by removing the phosphate group at the C-7 position.</text>
</comment>
<comment type="catalytic activity">
    <reaction>
        <text>D-glycero-beta-D-manno-heptose 1,7-bisphosphate + H2O = D-glycero-beta-D-manno-heptose 1-phosphate + phosphate</text>
        <dbReference type="Rhea" id="RHEA:28518"/>
        <dbReference type="ChEBI" id="CHEBI:15377"/>
        <dbReference type="ChEBI" id="CHEBI:43474"/>
        <dbReference type="ChEBI" id="CHEBI:60208"/>
        <dbReference type="ChEBI" id="CHEBI:61593"/>
        <dbReference type="EC" id="3.1.3.82"/>
    </reaction>
</comment>
<comment type="cofactor">
    <cofactor evidence="1">
        <name>Mg(2+)</name>
        <dbReference type="ChEBI" id="CHEBI:18420"/>
    </cofactor>
</comment>
<comment type="cofactor">
    <cofactor evidence="1">
        <name>Zn(2+)</name>
        <dbReference type="ChEBI" id="CHEBI:29105"/>
    </cofactor>
</comment>
<comment type="pathway">
    <text>Nucleotide-sugar biosynthesis; ADP-L-glycero-beta-D-manno-heptose biosynthesis; ADP-L-glycero-beta-D-manno-heptose from D-glycero-beta-D-manno-heptose 7-phosphate: step 2/4.</text>
</comment>
<comment type="pathway">
    <text>Bacterial outer membrane biogenesis; LPS core biosynthesis.</text>
</comment>
<comment type="subunit">
    <text evidence="1">Monomer.</text>
</comment>
<comment type="subcellular location">
    <subcellularLocation>
        <location evidence="1">Cytoplasm</location>
    </subcellularLocation>
</comment>
<comment type="similarity">
    <text evidence="3">Belongs to the GmhB family.</text>
</comment>
<gene>
    <name type="primary">gmhB</name>
    <name type="ordered locus">HP_0860</name>
</gene>
<feature type="chain" id="PRO_0000209395" description="D-glycero-beta-D-manno-heptose-1,7-bisphosphate 7-phosphatase">
    <location>
        <begin position="1"/>
        <end position="173"/>
    </location>
</feature>
<feature type="active site" description="Nucleophile" evidence="1">
    <location>
        <position position="10"/>
    </location>
</feature>
<feature type="active site" description="Proton donor" evidence="1">
    <location>
        <position position="12"/>
    </location>
</feature>
<feature type="binding site" evidence="1">
    <location>
        <begin position="10"/>
        <end position="12"/>
    </location>
    <ligand>
        <name>substrate</name>
    </ligand>
</feature>
<feature type="binding site" evidence="1">
    <location>
        <position position="10"/>
    </location>
    <ligand>
        <name>Mg(2+)</name>
        <dbReference type="ChEBI" id="CHEBI:18420"/>
    </ligand>
</feature>
<feature type="binding site" evidence="1">
    <location>
        <position position="12"/>
    </location>
    <ligand>
        <name>Mg(2+)</name>
        <dbReference type="ChEBI" id="CHEBI:18420"/>
    </ligand>
</feature>
<feature type="binding site" evidence="1">
    <location>
        <begin position="18"/>
        <end position="21"/>
    </location>
    <ligand>
        <name>substrate</name>
    </ligand>
</feature>
<feature type="binding site" evidence="1">
    <location>
        <begin position="52"/>
        <end position="55"/>
    </location>
    <ligand>
        <name>substrate</name>
    </ligand>
</feature>
<feature type="binding site" evidence="2">
    <location>
        <position position="92"/>
    </location>
    <ligand>
        <name>Zn(2+)</name>
        <dbReference type="ChEBI" id="CHEBI:29105"/>
    </ligand>
</feature>
<feature type="binding site" evidence="2">
    <location>
        <position position="94"/>
    </location>
    <ligand>
        <name>Zn(2+)</name>
        <dbReference type="ChEBI" id="CHEBI:29105"/>
    </ligand>
</feature>
<feature type="binding site" evidence="2">
    <location>
        <position position="100"/>
    </location>
    <ligand>
        <name>Zn(2+)</name>
        <dbReference type="ChEBI" id="CHEBI:29105"/>
    </ligand>
</feature>
<feature type="binding site" evidence="2">
    <location>
        <position position="102"/>
    </location>
    <ligand>
        <name>Zn(2+)</name>
        <dbReference type="ChEBI" id="CHEBI:29105"/>
    </ligand>
</feature>
<feature type="binding site" evidence="1">
    <location>
        <begin position="103"/>
        <end position="104"/>
    </location>
    <ligand>
        <name>substrate</name>
    </ligand>
</feature>
<feature type="binding site" evidence="1">
    <location>
        <position position="129"/>
    </location>
    <ligand>
        <name>Mg(2+)</name>
        <dbReference type="ChEBI" id="CHEBI:18420"/>
    </ligand>
</feature>
<feature type="binding site" evidence="1">
    <location>
        <position position="130"/>
    </location>
    <ligand>
        <name>Mg(2+)</name>
        <dbReference type="ChEBI" id="CHEBI:18420"/>
    </ligand>
</feature>
<feature type="binding site" evidence="1">
    <location>
        <position position="130"/>
    </location>
    <ligand>
        <name>substrate</name>
    </ligand>
</feature>
<feature type="site" description="Stabilizes the phosphoryl group" evidence="1">
    <location>
        <position position="52"/>
    </location>
</feature>
<feature type="site" description="Contributes to substrate recognition" evidence="1">
    <location>
        <position position="103"/>
    </location>
</feature>
<feature type="site" description="Stabilizes the phosphoryl group" evidence="1">
    <location>
        <position position="104"/>
    </location>
</feature>
<dbReference type="EC" id="3.1.3.82"/>
<dbReference type="EMBL" id="AE000511">
    <property type="protein sequence ID" value="AAD07906.1"/>
    <property type="molecule type" value="Genomic_DNA"/>
</dbReference>
<dbReference type="PIR" id="D64627">
    <property type="entry name" value="D64627"/>
</dbReference>
<dbReference type="RefSeq" id="NP_207654.1">
    <property type="nucleotide sequence ID" value="NC_000915.1"/>
</dbReference>
<dbReference type="RefSeq" id="WP_001095387.1">
    <property type="nucleotide sequence ID" value="NC_018939.1"/>
</dbReference>
<dbReference type="SMR" id="O25531"/>
<dbReference type="FunCoup" id="O25531">
    <property type="interactions" value="179"/>
</dbReference>
<dbReference type="STRING" id="85962.HP_0860"/>
<dbReference type="PaxDb" id="85962-C694_04405"/>
<dbReference type="DNASU" id="899389"/>
<dbReference type="EnsemblBacteria" id="AAD07906">
    <property type="protein sequence ID" value="AAD07906"/>
    <property type="gene ID" value="HP_0860"/>
</dbReference>
<dbReference type="KEGG" id="heo:C694_04405"/>
<dbReference type="KEGG" id="hpy:HP_0860"/>
<dbReference type="PATRIC" id="fig|85962.47.peg.914"/>
<dbReference type="eggNOG" id="COG0241">
    <property type="taxonomic scope" value="Bacteria"/>
</dbReference>
<dbReference type="InParanoid" id="O25531"/>
<dbReference type="OrthoDB" id="9814110at2"/>
<dbReference type="PhylomeDB" id="O25531"/>
<dbReference type="BRENDA" id="3.1.3.82">
    <property type="organism ID" value="2604"/>
</dbReference>
<dbReference type="UniPathway" id="UPA00356">
    <property type="reaction ID" value="UER00438"/>
</dbReference>
<dbReference type="UniPathway" id="UPA00958"/>
<dbReference type="PHI-base" id="PHI:11747"/>
<dbReference type="Proteomes" id="UP000000429">
    <property type="component" value="Chromosome"/>
</dbReference>
<dbReference type="GO" id="GO:0005737">
    <property type="term" value="C:cytoplasm"/>
    <property type="evidence" value="ECO:0007669"/>
    <property type="project" value="UniProtKB-SubCell"/>
</dbReference>
<dbReference type="GO" id="GO:0034200">
    <property type="term" value="F:D-glycero-beta-D-manno-heptose 1,7-bisphosphate 7-phosphatase activity"/>
    <property type="evidence" value="ECO:0000250"/>
    <property type="project" value="UniProtKB"/>
</dbReference>
<dbReference type="GO" id="GO:0000287">
    <property type="term" value="F:magnesium ion binding"/>
    <property type="evidence" value="ECO:0000250"/>
    <property type="project" value="UniProtKB"/>
</dbReference>
<dbReference type="GO" id="GO:0008270">
    <property type="term" value="F:zinc ion binding"/>
    <property type="evidence" value="ECO:0000250"/>
    <property type="project" value="UniProtKB"/>
</dbReference>
<dbReference type="GO" id="GO:0097171">
    <property type="term" value="P:ADP-L-glycero-beta-D-manno-heptose biosynthetic process"/>
    <property type="evidence" value="ECO:0007669"/>
    <property type="project" value="UniProtKB-UniPathway"/>
</dbReference>
<dbReference type="GO" id="GO:0009244">
    <property type="term" value="P:lipopolysaccharide core region biosynthetic process"/>
    <property type="evidence" value="ECO:0007669"/>
    <property type="project" value="UniProtKB-UniPathway"/>
</dbReference>
<dbReference type="CDD" id="cd07503">
    <property type="entry name" value="HAD_HisB-N"/>
    <property type="match status" value="1"/>
</dbReference>
<dbReference type="FunFam" id="3.40.50.1000:FF:000418">
    <property type="entry name" value="D,D-heptose 1,7-bisphosphate phosphatase"/>
    <property type="match status" value="1"/>
</dbReference>
<dbReference type="Gene3D" id="3.40.50.1000">
    <property type="entry name" value="HAD superfamily/HAD-like"/>
    <property type="match status" value="1"/>
</dbReference>
<dbReference type="InterPro" id="IPR036412">
    <property type="entry name" value="HAD-like_sf"/>
</dbReference>
<dbReference type="InterPro" id="IPR006549">
    <property type="entry name" value="HAD-SF_hydro_IIIA"/>
</dbReference>
<dbReference type="InterPro" id="IPR041492">
    <property type="entry name" value="HAD_2"/>
</dbReference>
<dbReference type="InterPro" id="IPR023214">
    <property type="entry name" value="HAD_sf"/>
</dbReference>
<dbReference type="InterPro" id="IPR004446">
    <property type="entry name" value="Heptose_bisP_phosphatase"/>
</dbReference>
<dbReference type="InterPro" id="IPR006543">
    <property type="entry name" value="Histidinol-phos"/>
</dbReference>
<dbReference type="NCBIfam" id="TIGR00213">
    <property type="entry name" value="GmhB_yaeD"/>
    <property type="match status" value="1"/>
</dbReference>
<dbReference type="NCBIfam" id="TIGR01662">
    <property type="entry name" value="HAD-SF-IIIA"/>
    <property type="match status" value="1"/>
</dbReference>
<dbReference type="NCBIfam" id="TIGR01656">
    <property type="entry name" value="Histidinol-ppas"/>
    <property type="match status" value="1"/>
</dbReference>
<dbReference type="PANTHER" id="PTHR42891">
    <property type="entry name" value="D-GLYCERO-BETA-D-MANNO-HEPTOSE-1,7-BISPHOSPHATE 7-PHOSPHATASE"/>
    <property type="match status" value="1"/>
</dbReference>
<dbReference type="PANTHER" id="PTHR42891:SF1">
    <property type="entry name" value="D-GLYCERO-BETA-D-MANNO-HEPTOSE-1,7-BISPHOSPHATE 7-PHOSPHATASE"/>
    <property type="match status" value="1"/>
</dbReference>
<dbReference type="Pfam" id="PF13419">
    <property type="entry name" value="HAD_2"/>
    <property type="match status" value="1"/>
</dbReference>
<dbReference type="PIRSF" id="PIRSF004682">
    <property type="entry name" value="GmhB"/>
    <property type="match status" value="1"/>
</dbReference>
<dbReference type="SUPFAM" id="SSF56784">
    <property type="entry name" value="HAD-like"/>
    <property type="match status" value="1"/>
</dbReference>
<protein>
    <recommendedName>
        <fullName>D-glycero-beta-D-manno-heptose-1,7-bisphosphate 7-phosphatase</fullName>
        <ecNumber>3.1.3.82</ecNumber>
    </recommendedName>
    <alternativeName>
        <fullName>D,D-heptose 1,7-bisphosphate phosphatase</fullName>
        <shortName>HBP phosphatase</shortName>
    </alternativeName>
</protein>
<accession>O25531</accession>
<organism>
    <name type="scientific">Helicobacter pylori (strain ATCC 700392 / 26695)</name>
    <name type="common">Campylobacter pylori</name>
    <dbReference type="NCBI Taxonomy" id="85962"/>
    <lineage>
        <taxon>Bacteria</taxon>
        <taxon>Pseudomonadati</taxon>
        <taxon>Campylobacterota</taxon>
        <taxon>Epsilonproteobacteria</taxon>
        <taxon>Campylobacterales</taxon>
        <taxon>Helicobacteraceae</taxon>
        <taxon>Helicobacter</taxon>
    </lineage>
</organism>
<keyword id="KW-0119">Carbohydrate metabolism</keyword>
<keyword id="KW-0963">Cytoplasm</keyword>
<keyword id="KW-0378">Hydrolase</keyword>
<keyword id="KW-0448">Lipopolysaccharide biosynthesis</keyword>
<keyword id="KW-0460">Magnesium</keyword>
<keyword id="KW-0479">Metal-binding</keyword>
<keyword id="KW-1185">Reference proteome</keyword>
<keyword id="KW-0862">Zinc</keyword>
<evidence type="ECO:0000250" key="1"/>
<evidence type="ECO:0000250" key="2">
    <source>
        <dbReference type="UniProtKB" id="Q7WG29"/>
    </source>
</evidence>
<evidence type="ECO:0000305" key="3"/>